<sequence length="150" mass="16176">MANATSGVAVSEECKARFQELRAGRAHRFVVFKIDDAMRQVVVDRVGPRDAGFDELTASLPADGCRYAVYDHDFTVSDATATAAAGEGGEAPRSKIFFVSWSPAAADVRSKMVYASSNEGFKKELDGVQIDLQATDPSELTLDVLKDHTS</sequence>
<accession>Q84TB6</accession>
<accession>A3AP45</accession>
<dbReference type="EMBL" id="AC104433">
    <property type="protein sequence ID" value="AAO65861.1"/>
    <property type="molecule type" value="Genomic_DNA"/>
</dbReference>
<dbReference type="EMBL" id="DP000009">
    <property type="protein sequence ID" value="ABF99587.1"/>
    <property type="molecule type" value="Genomic_DNA"/>
</dbReference>
<dbReference type="EMBL" id="AP008209">
    <property type="protein sequence ID" value="BAF13634.1"/>
    <property type="molecule type" value="Genomic_DNA"/>
</dbReference>
<dbReference type="EMBL" id="AP014959">
    <property type="protein sequence ID" value="BAS87083.1"/>
    <property type="molecule type" value="Genomic_DNA"/>
</dbReference>
<dbReference type="EMBL" id="CM000140">
    <property type="protein sequence ID" value="EAZ29084.1"/>
    <property type="molecule type" value="Genomic_DNA"/>
</dbReference>
<dbReference type="EMBL" id="AK241081">
    <property type="protein sequence ID" value="BAH00948.1"/>
    <property type="molecule type" value="mRNA"/>
</dbReference>
<dbReference type="RefSeq" id="XP_015632173.1">
    <property type="nucleotide sequence ID" value="XM_015776687.1"/>
</dbReference>
<dbReference type="SMR" id="Q84TB6"/>
<dbReference type="FunCoup" id="Q84TB6">
    <property type="interactions" value="2281"/>
</dbReference>
<dbReference type="STRING" id="39947.Q84TB6"/>
<dbReference type="PaxDb" id="39947-Q84TB6"/>
<dbReference type="EnsemblPlants" id="Os03t0820500-01">
    <property type="protein sequence ID" value="Os03t0820500-01"/>
    <property type="gene ID" value="Os03g0820500"/>
</dbReference>
<dbReference type="Gramene" id="Os03t0820500-01">
    <property type="protein sequence ID" value="Os03t0820500-01"/>
    <property type="gene ID" value="Os03g0820500"/>
</dbReference>
<dbReference type="KEGG" id="dosa:Os03g0820500"/>
<dbReference type="eggNOG" id="KOG1735">
    <property type="taxonomic scope" value="Eukaryota"/>
</dbReference>
<dbReference type="HOGENOM" id="CLU_094004_2_2_1"/>
<dbReference type="InParanoid" id="Q84TB6"/>
<dbReference type="OMA" id="HICMRAN"/>
<dbReference type="OrthoDB" id="10249245at2759"/>
<dbReference type="Proteomes" id="UP000000763">
    <property type="component" value="Chromosome 3"/>
</dbReference>
<dbReference type="Proteomes" id="UP000007752">
    <property type="component" value="Chromosome 3"/>
</dbReference>
<dbReference type="Proteomes" id="UP000059680">
    <property type="component" value="Chromosome 3"/>
</dbReference>
<dbReference type="GO" id="GO:0015629">
    <property type="term" value="C:actin cytoskeleton"/>
    <property type="evidence" value="ECO:0000318"/>
    <property type="project" value="GO_Central"/>
</dbReference>
<dbReference type="GO" id="GO:0005737">
    <property type="term" value="C:cytoplasm"/>
    <property type="evidence" value="ECO:0000318"/>
    <property type="project" value="GO_Central"/>
</dbReference>
<dbReference type="GO" id="GO:0051015">
    <property type="term" value="F:actin filament binding"/>
    <property type="evidence" value="ECO:0000318"/>
    <property type="project" value="GO_Central"/>
</dbReference>
<dbReference type="GO" id="GO:0030042">
    <property type="term" value="P:actin filament depolymerization"/>
    <property type="evidence" value="ECO:0000318"/>
    <property type="project" value="GO_Central"/>
</dbReference>
<dbReference type="CDD" id="cd11286">
    <property type="entry name" value="ADF_cofilin_like"/>
    <property type="match status" value="1"/>
</dbReference>
<dbReference type="Gene3D" id="3.40.20.10">
    <property type="entry name" value="Severin"/>
    <property type="match status" value="1"/>
</dbReference>
<dbReference type="InterPro" id="IPR002108">
    <property type="entry name" value="ADF-H"/>
</dbReference>
<dbReference type="InterPro" id="IPR029006">
    <property type="entry name" value="ADF-H/Gelsolin-like_dom_sf"/>
</dbReference>
<dbReference type="InterPro" id="IPR017904">
    <property type="entry name" value="ADF/Cofilin"/>
</dbReference>
<dbReference type="PANTHER" id="PTHR11913">
    <property type="entry name" value="COFILIN-RELATED"/>
    <property type="match status" value="1"/>
</dbReference>
<dbReference type="Pfam" id="PF00241">
    <property type="entry name" value="Cofilin_ADF"/>
    <property type="match status" value="1"/>
</dbReference>
<dbReference type="SMART" id="SM00102">
    <property type="entry name" value="ADF"/>
    <property type="match status" value="1"/>
</dbReference>
<dbReference type="SUPFAM" id="SSF55753">
    <property type="entry name" value="Actin depolymerizing proteins"/>
    <property type="match status" value="1"/>
</dbReference>
<dbReference type="PROSITE" id="PS51263">
    <property type="entry name" value="ADF_H"/>
    <property type="match status" value="1"/>
</dbReference>
<keyword id="KW-0009">Actin-binding</keyword>
<keyword id="KW-0903">Direct protein sequencing</keyword>
<keyword id="KW-1185">Reference proteome</keyword>
<keyword id="KW-0346">Stress response</keyword>
<feature type="chain" id="PRO_0000278106" description="Actin-depolymerizing factor 3">
    <location>
        <begin position="1"/>
        <end position="150"/>
    </location>
</feature>
<feature type="domain" description="ADF-H" evidence="2">
    <location>
        <begin position="7"/>
        <end position="150"/>
    </location>
</feature>
<gene>
    <name type="primary">ADF3</name>
    <name type="ordered locus">Os03g0820500</name>
    <name type="ordered locus">LOC_Os03g60580</name>
    <name type="ORF">OJ1754_E06.21</name>
    <name evidence="5" type="ORF">OsJ_13138</name>
</gene>
<protein>
    <recommendedName>
        <fullName>Actin-depolymerizing factor 3</fullName>
        <shortName>ADF-3</shortName>
        <shortName>OsADF3</shortName>
    </recommendedName>
</protein>
<comment type="function">
    <text evidence="1">Actin-depolymerizing protein. Severs actin filaments (F-actin) and binds to actin monomers (By similarity).</text>
</comment>
<comment type="induction">
    <text evidence="3">By drought stress (at protein level).</text>
</comment>
<comment type="similarity">
    <text evidence="4">Belongs to the actin-binding proteins ADF family.</text>
</comment>
<evidence type="ECO:0000250" key="1"/>
<evidence type="ECO:0000255" key="2">
    <source>
        <dbReference type="PROSITE-ProRule" id="PRU00599"/>
    </source>
</evidence>
<evidence type="ECO:0000269" key="3">
    <source>
    </source>
</evidence>
<evidence type="ECO:0000305" key="4"/>
<evidence type="ECO:0000312" key="5">
    <source>
        <dbReference type="EMBL" id="EAZ29084.1"/>
    </source>
</evidence>
<reference key="1">
    <citation type="journal article" date="2005" name="Genome Res.">
        <title>Sequence, annotation, and analysis of synteny between rice chromosome 3 and diverged grass species.</title>
        <authorList>
            <consortium name="The rice chromosome 3 sequencing consortium"/>
            <person name="Buell C.R."/>
            <person name="Yuan Q."/>
            <person name="Ouyang S."/>
            <person name="Liu J."/>
            <person name="Zhu W."/>
            <person name="Wang A."/>
            <person name="Maiti R."/>
            <person name="Haas B."/>
            <person name="Wortman J."/>
            <person name="Pertea M."/>
            <person name="Jones K.M."/>
            <person name="Kim M."/>
            <person name="Overton L."/>
            <person name="Tsitrin T."/>
            <person name="Fadrosh D."/>
            <person name="Bera J."/>
            <person name="Weaver B."/>
            <person name="Jin S."/>
            <person name="Johri S."/>
            <person name="Reardon M."/>
            <person name="Webb K."/>
            <person name="Hill J."/>
            <person name="Moffat K."/>
            <person name="Tallon L."/>
            <person name="Van Aken S."/>
            <person name="Lewis M."/>
            <person name="Utterback T."/>
            <person name="Feldblyum T."/>
            <person name="Zismann V."/>
            <person name="Iobst S."/>
            <person name="Hsiao J."/>
            <person name="de Vazeille A.R."/>
            <person name="Salzberg S.L."/>
            <person name="White O."/>
            <person name="Fraser C.M."/>
            <person name="Yu Y."/>
            <person name="Kim H."/>
            <person name="Rambo T."/>
            <person name="Currie J."/>
            <person name="Collura K."/>
            <person name="Kernodle-Thompson S."/>
            <person name="Wei F."/>
            <person name="Kudrna K."/>
            <person name="Ammiraju J.S.S."/>
            <person name="Luo M."/>
            <person name="Goicoechea J.L."/>
            <person name="Wing R.A."/>
            <person name="Henry D."/>
            <person name="Oates R."/>
            <person name="Palmer M."/>
            <person name="Pries G."/>
            <person name="Saski C."/>
            <person name="Simmons J."/>
            <person name="Soderlund C."/>
            <person name="Nelson W."/>
            <person name="de la Bastide M."/>
            <person name="Spiegel L."/>
            <person name="Nascimento L."/>
            <person name="Huang E."/>
            <person name="Preston R."/>
            <person name="Zutavern T."/>
            <person name="Palmer L."/>
            <person name="O'Shaughnessy A."/>
            <person name="Dike S."/>
            <person name="McCombie W.R."/>
            <person name="Minx P."/>
            <person name="Cordum H."/>
            <person name="Wilson R."/>
            <person name="Jin W."/>
            <person name="Lee H.R."/>
            <person name="Jiang J."/>
            <person name="Jackson S."/>
        </authorList>
    </citation>
    <scope>NUCLEOTIDE SEQUENCE [LARGE SCALE GENOMIC DNA]</scope>
    <source>
        <strain>cv. Nipponbare</strain>
    </source>
</reference>
<reference key="2">
    <citation type="journal article" date="2005" name="Nature">
        <title>The map-based sequence of the rice genome.</title>
        <authorList>
            <consortium name="International rice genome sequencing project (IRGSP)"/>
        </authorList>
    </citation>
    <scope>NUCLEOTIDE SEQUENCE [LARGE SCALE GENOMIC DNA]</scope>
    <source>
        <strain>cv. Nipponbare</strain>
    </source>
</reference>
<reference key="3">
    <citation type="journal article" date="2008" name="Nucleic Acids Res.">
        <title>The rice annotation project database (RAP-DB): 2008 update.</title>
        <authorList>
            <consortium name="The rice annotation project (RAP)"/>
        </authorList>
    </citation>
    <scope>GENOME REANNOTATION</scope>
    <source>
        <strain>cv. Nipponbare</strain>
    </source>
</reference>
<reference key="4">
    <citation type="journal article" date="2013" name="Rice">
        <title>Improvement of the Oryza sativa Nipponbare reference genome using next generation sequence and optical map data.</title>
        <authorList>
            <person name="Kawahara Y."/>
            <person name="de la Bastide M."/>
            <person name="Hamilton J.P."/>
            <person name="Kanamori H."/>
            <person name="McCombie W.R."/>
            <person name="Ouyang S."/>
            <person name="Schwartz D.C."/>
            <person name="Tanaka T."/>
            <person name="Wu J."/>
            <person name="Zhou S."/>
            <person name="Childs K.L."/>
            <person name="Davidson R.M."/>
            <person name="Lin H."/>
            <person name="Quesada-Ocampo L."/>
            <person name="Vaillancourt B."/>
            <person name="Sakai H."/>
            <person name="Lee S.S."/>
            <person name="Kim J."/>
            <person name="Numa H."/>
            <person name="Itoh T."/>
            <person name="Buell C.R."/>
            <person name="Matsumoto T."/>
        </authorList>
    </citation>
    <scope>GENOME REANNOTATION</scope>
    <source>
        <strain>cv. Nipponbare</strain>
    </source>
</reference>
<reference key="5">
    <citation type="journal article" date="2005" name="PLoS Biol.">
        <title>The genomes of Oryza sativa: a history of duplications.</title>
        <authorList>
            <person name="Yu J."/>
            <person name="Wang J."/>
            <person name="Lin W."/>
            <person name="Li S."/>
            <person name="Li H."/>
            <person name="Zhou J."/>
            <person name="Ni P."/>
            <person name="Dong W."/>
            <person name="Hu S."/>
            <person name="Zeng C."/>
            <person name="Zhang J."/>
            <person name="Zhang Y."/>
            <person name="Li R."/>
            <person name="Xu Z."/>
            <person name="Li S."/>
            <person name="Li X."/>
            <person name="Zheng H."/>
            <person name="Cong L."/>
            <person name="Lin L."/>
            <person name="Yin J."/>
            <person name="Geng J."/>
            <person name="Li G."/>
            <person name="Shi J."/>
            <person name="Liu J."/>
            <person name="Lv H."/>
            <person name="Li J."/>
            <person name="Wang J."/>
            <person name="Deng Y."/>
            <person name="Ran L."/>
            <person name="Shi X."/>
            <person name="Wang X."/>
            <person name="Wu Q."/>
            <person name="Li C."/>
            <person name="Ren X."/>
            <person name="Wang J."/>
            <person name="Wang X."/>
            <person name="Li D."/>
            <person name="Liu D."/>
            <person name="Zhang X."/>
            <person name="Ji Z."/>
            <person name="Zhao W."/>
            <person name="Sun Y."/>
            <person name="Zhang Z."/>
            <person name="Bao J."/>
            <person name="Han Y."/>
            <person name="Dong L."/>
            <person name="Ji J."/>
            <person name="Chen P."/>
            <person name="Wu S."/>
            <person name="Liu J."/>
            <person name="Xiao Y."/>
            <person name="Bu D."/>
            <person name="Tan J."/>
            <person name="Yang L."/>
            <person name="Ye C."/>
            <person name="Zhang J."/>
            <person name="Xu J."/>
            <person name="Zhou Y."/>
            <person name="Yu Y."/>
            <person name="Zhang B."/>
            <person name="Zhuang S."/>
            <person name="Wei H."/>
            <person name="Liu B."/>
            <person name="Lei M."/>
            <person name="Yu H."/>
            <person name="Li Y."/>
            <person name="Xu H."/>
            <person name="Wei S."/>
            <person name="He X."/>
            <person name="Fang L."/>
            <person name="Zhang Z."/>
            <person name="Zhang Y."/>
            <person name="Huang X."/>
            <person name="Su Z."/>
            <person name="Tong W."/>
            <person name="Li J."/>
            <person name="Tong Z."/>
            <person name="Li S."/>
            <person name="Ye J."/>
            <person name="Wang L."/>
            <person name="Fang L."/>
            <person name="Lei T."/>
            <person name="Chen C.-S."/>
            <person name="Chen H.-C."/>
            <person name="Xu Z."/>
            <person name="Li H."/>
            <person name="Huang H."/>
            <person name="Zhang F."/>
            <person name="Xu H."/>
            <person name="Li N."/>
            <person name="Zhao C."/>
            <person name="Li S."/>
            <person name="Dong L."/>
            <person name="Huang Y."/>
            <person name="Li L."/>
            <person name="Xi Y."/>
            <person name="Qi Q."/>
            <person name="Li W."/>
            <person name="Zhang B."/>
            <person name="Hu W."/>
            <person name="Zhang Y."/>
            <person name="Tian X."/>
            <person name="Jiao Y."/>
            <person name="Liang X."/>
            <person name="Jin J."/>
            <person name="Gao L."/>
            <person name="Zheng W."/>
            <person name="Hao B."/>
            <person name="Liu S.-M."/>
            <person name="Wang W."/>
            <person name="Yuan L."/>
            <person name="Cao M."/>
            <person name="McDermott J."/>
            <person name="Samudrala R."/>
            <person name="Wang J."/>
            <person name="Wong G.K.-S."/>
            <person name="Yang H."/>
        </authorList>
    </citation>
    <scope>NUCLEOTIDE SEQUENCE [LARGE SCALE GENOMIC DNA]</scope>
    <source>
        <strain>cv. Nipponbare</strain>
    </source>
</reference>
<reference key="6">
    <citation type="submission" date="2006-10" db="EMBL/GenBank/DDBJ databases">
        <title>Oryza sativa full length cDNA.</title>
        <authorList>
            <consortium name="The rice full-length cDNA consortium"/>
        </authorList>
    </citation>
    <scope>NUCLEOTIDE SEQUENCE [LARGE SCALE MRNA]</scope>
    <source>
        <strain>cv. Nipponbare</strain>
    </source>
</reference>
<reference key="7">
    <citation type="journal article" date="2006" name="J. Proteome Res.">
        <title>Proteomic analysis of rice leaf sheath during drought stress.</title>
        <authorList>
            <person name="Ali G.M."/>
            <person name="Komatsu S."/>
        </authorList>
    </citation>
    <scope>PROTEIN SEQUENCE OF 56-64</scope>
    <scope>INDUCTION</scope>
</reference>
<reference key="8">
    <citation type="journal article" date="2006" name="J. Plant Physiol.">
        <title>Comparative study of rice and Arabidopsis actin-depolymerizing factors gene families.</title>
        <authorList>
            <person name="Feng Y."/>
            <person name="Liu Q."/>
            <person name="Xue Q."/>
        </authorList>
    </citation>
    <scope>GENE FAMILY</scope>
</reference>
<name>ADF3_ORYSJ</name>
<organism>
    <name type="scientific">Oryza sativa subsp. japonica</name>
    <name type="common">Rice</name>
    <dbReference type="NCBI Taxonomy" id="39947"/>
    <lineage>
        <taxon>Eukaryota</taxon>
        <taxon>Viridiplantae</taxon>
        <taxon>Streptophyta</taxon>
        <taxon>Embryophyta</taxon>
        <taxon>Tracheophyta</taxon>
        <taxon>Spermatophyta</taxon>
        <taxon>Magnoliopsida</taxon>
        <taxon>Liliopsida</taxon>
        <taxon>Poales</taxon>
        <taxon>Poaceae</taxon>
        <taxon>BOP clade</taxon>
        <taxon>Oryzoideae</taxon>
        <taxon>Oryzeae</taxon>
        <taxon>Oryzinae</taxon>
        <taxon>Oryza</taxon>
        <taxon>Oryza sativa</taxon>
    </lineage>
</organism>
<proteinExistence type="evidence at protein level"/>